<comment type="function">
    <text evidence="10 11">Cell wall-anchored surface receptor that extracts heme from oxidized methemoglobin/metHb to enable growth on hemoglobin as a sole iron source (PubMed:24871270). Rapidly extracts heme from hemoglobin and transfers it to IsdA or IsdC, which then relays it to the membrane transporter/IsdEF for internalization. Also promotes resistance to hydrogen peroxide and killing by neutrophils (PubMed:18097052).</text>
</comment>
<comment type="subunit">
    <text evidence="2">Interacts with host HBA; this interaction allows heme extraction as iron source. Interacts with IsdA.</text>
</comment>
<comment type="subcellular location">
    <subcellularLocation>
        <location evidence="7">Secreted</location>
        <location evidence="7">Cell wall</location>
        <topology evidence="7">Peptidoglycan-anchor</topology>
    </subcellularLocation>
    <text evidence="3">Anchored to the cell wall by sortase A (By similarity).</text>
</comment>
<comment type="induction">
    <text evidence="1 10">Repressed by fur in the presence of iron (By similarity). Transcriptionally up-regulated by hydrogen peroxide and to a lesser extent by hypochlorous acid. Slightly down-regulated by human neutrophil azurophilic granule proteins.</text>
</comment>
<comment type="domain">
    <text evidence="11">The two NEAr transporter (NEAT) domains act in concert to bind, extract, and transfer heme from hemoglobin to downstream Isd proteins.</text>
</comment>
<comment type="biotechnology">
    <text evidence="9">A combined vaccine containing IsdA, IsdB, SdrD and SdrE afforded significant protection in mice against a lethal challenge with S.aureus Newman or any of the clinical isolates NRS252, N315, NRS248, USA100 and USA400. The immune response elicited by the combined vaccine is greater than the one elicited by its individual components.</text>
</comment>
<comment type="similarity">
    <text evidence="12">Belongs to the IsdB family.</text>
</comment>
<reference key="1">
    <citation type="journal article" date="2002" name="Lancet">
        <title>Genome and virulence determinants of high virulence community-acquired MRSA.</title>
        <authorList>
            <person name="Baba T."/>
            <person name="Takeuchi F."/>
            <person name="Kuroda M."/>
            <person name="Yuzawa H."/>
            <person name="Aoki K."/>
            <person name="Oguchi A."/>
            <person name="Nagai Y."/>
            <person name="Iwama N."/>
            <person name="Asano K."/>
            <person name="Naimi T."/>
            <person name="Kuroda H."/>
            <person name="Cui L."/>
            <person name="Yamamoto K."/>
            <person name="Hiramatsu K."/>
        </authorList>
    </citation>
    <scope>NUCLEOTIDE SEQUENCE [LARGE SCALE GENOMIC DNA]</scope>
    <source>
        <strain>MW2</strain>
    </source>
</reference>
<reference key="2">
    <citation type="journal article" date="2006" name="Proc. Natl. Acad. Sci. U.S.A.">
        <title>Vaccine assembly from surface proteins of Staphylococcus aureus.</title>
        <authorList>
            <person name="Stranger-Jones Y.K."/>
            <person name="Bae T."/>
            <person name="Schneewind O."/>
        </authorList>
    </citation>
    <scope>BIOTECHNOLOGY</scope>
</reference>
<reference key="3">
    <citation type="journal article" date="2008" name="J. Immunol.">
        <title>Neutrophil microbicides induce a pathogen survival response in community-associated methicillin-resistant Staphylococcus aureus.</title>
        <authorList>
            <person name="Palazzolo-Ballance A.M."/>
            <person name="Reniere M.L."/>
            <person name="Braughton K.R."/>
            <person name="Sturdevant D.E."/>
            <person name="Otto M."/>
            <person name="Kreiswirth B.N."/>
            <person name="Skaar E.P."/>
            <person name="DeLeo F.R."/>
        </authorList>
    </citation>
    <scope>FUNCTION IN RESISTANCE TO INNATE HOST DEFENSE</scope>
    <scope>INDUCTION</scope>
</reference>
<reference key="4">
    <citation type="journal article" date="2014" name="Biochemistry">
        <title>Solution structure and molecular determinants of hemoglobin binding of the first NEAT domain of IsdB in Staphylococcus aureus.</title>
        <authorList>
            <person name="Fonner B.A."/>
            <person name="Tripet B.P."/>
            <person name="Eilers B.J."/>
            <person name="Stanisich J."/>
            <person name="Sullivan-Springhetti R.K."/>
            <person name="Moore R."/>
            <person name="Liu M."/>
            <person name="Lei B."/>
            <person name="Copie V."/>
        </authorList>
    </citation>
    <scope>STRUCTURE BY NMR OF 125-272</scope>
    <scope>FUNCTION</scope>
    <scope>MUTAGENESIS OF PHE-164</scope>
    <scope>DOMAIN</scope>
</reference>
<keyword id="KW-0002">3D-structure</keyword>
<keyword id="KW-0134">Cell wall</keyword>
<keyword id="KW-0349">Heme</keyword>
<keyword id="KW-0408">Iron</keyword>
<keyword id="KW-0479">Metal-binding</keyword>
<keyword id="KW-0572">Peptidoglycan-anchor</keyword>
<keyword id="KW-0677">Repeat</keyword>
<keyword id="KW-0964">Secreted</keyword>
<keyword id="KW-0732">Signal</keyword>
<keyword id="KW-0843">Virulence</keyword>
<name>ISDB_STAAW</name>
<organism>
    <name type="scientific">Staphylococcus aureus (strain MW2)</name>
    <dbReference type="NCBI Taxonomy" id="196620"/>
    <lineage>
        <taxon>Bacteria</taxon>
        <taxon>Bacillati</taxon>
        <taxon>Bacillota</taxon>
        <taxon>Bacilli</taxon>
        <taxon>Bacillales</taxon>
        <taxon>Staphylococcaceae</taxon>
        <taxon>Staphylococcus</taxon>
    </lineage>
</organism>
<protein>
    <recommendedName>
        <fullName>Iron-regulated surface determinant protein B</fullName>
    </recommendedName>
    <alternativeName>
        <fullName>Fur-regulated protein B</fullName>
    </alternativeName>
    <alternativeName>
        <fullName>Staphylococcal iron-regulated protein H</fullName>
    </alternativeName>
    <alternativeName>
        <fullName>Staphylococcus aureus surface protein J</fullName>
    </alternativeName>
</protein>
<proteinExistence type="evidence at protein level"/>
<dbReference type="EMBL" id="BA000033">
    <property type="protein sequence ID" value="BAB94876.1"/>
    <property type="molecule type" value="Genomic_DNA"/>
</dbReference>
<dbReference type="RefSeq" id="WP_001041586.1">
    <property type="nucleotide sequence ID" value="NC_003923.1"/>
</dbReference>
<dbReference type="PDB" id="2MOQ">
    <property type="method" value="NMR"/>
    <property type="chains" value="A=125-272"/>
</dbReference>
<dbReference type="PDB" id="7PCF">
    <property type="method" value="EM"/>
    <property type="resolution" value="5.82 A"/>
    <property type="chains" value="E/F=124-485"/>
</dbReference>
<dbReference type="PDB" id="7PCH">
    <property type="method" value="EM"/>
    <property type="resolution" value="2.89 A"/>
    <property type="chains" value="E/F=124-485"/>
</dbReference>
<dbReference type="PDB" id="7PCQ">
    <property type="method" value="EM"/>
    <property type="resolution" value="3.62 A"/>
    <property type="chains" value="E=124-485"/>
</dbReference>
<dbReference type="PDBsum" id="2MOQ"/>
<dbReference type="PDBsum" id="7PCF"/>
<dbReference type="PDBsum" id="7PCH"/>
<dbReference type="PDBsum" id="7PCQ"/>
<dbReference type="EMDB" id="EMD-13319"/>
<dbReference type="EMDB" id="EMD-13320"/>
<dbReference type="EMDB" id="EMD-13325"/>
<dbReference type="SMR" id="Q8NX66"/>
<dbReference type="KEGG" id="sam:MW1011"/>
<dbReference type="HOGENOM" id="CLU_016167_0_0_9"/>
<dbReference type="EvolutionaryTrace" id="Q8NX66"/>
<dbReference type="PRO" id="PR:Q8NX66"/>
<dbReference type="GO" id="GO:0005576">
    <property type="term" value="C:extracellular region"/>
    <property type="evidence" value="ECO:0007669"/>
    <property type="project" value="UniProtKB-KW"/>
</dbReference>
<dbReference type="GO" id="GO:0015232">
    <property type="term" value="F:heme transmembrane transporter activity"/>
    <property type="evidence" value="ECO:0007669"/>
    <property type="project" value="InterPro"/>
</dbReference>
<dbReference type="GO" id="GO:0046872">
    <property type="term" value="F:metal ion binding"/>
    <property type="evidence" value="ECO:0007669"/>
    <property type="project" value="UniProtKB-KW"/>
</dbReference>
<dbReference type="CDD" id="cd06920">
    <property type="entry name" value="NEAT"/>
    <property type="match status" value="1"/>
</dbReference>
<dbReference type="Gene3D" id="1.20.58.1270">
    <property type="match status" value="1"/>
</dbReference>
<dbReference type="Gene3D" id="2.60.40.1850">
    <property type="match status" value="2"/>
</dbReference>
<dbReference type="InterPro" id="IPR019929">
    <property type="entry name" value="Iron-reg_IsdB"/>
</dbReference>
<dbReference type="InterPro" id="IPR048652">
    <property type="entry name" value="Isd_H_B_linker"/>
</dbReference>
<dbReference type="InterPro" id="IPR050436">
    <property type="entry name" value="IsdA"/>
</dbReference>
<dbReference type="InterPro" id="IPR019931">
    <property type="entry name" value="LPXTG_anchor"/>
</dbReference>
<dbReference type="InterPro" id="IPR006635">
    <property type="entry name" value="NEAT_dom"/>
</dbReference>
<dbReference type="InterPro" id="IPR037250">
    <property type="entry name" value="NEAT_dom_sf"/>
</dbReference>
<dbReference type="InterPro" id="IPR005877">
    <property type="entry name" value="YSIRK_signal_dom"/>
</dbReference>
<dbReference type="NCBIfam" id="TIGR03657">
    <property type="entry name" value="IsdB"/>
    <property type="match status" value="1"/>
</dbReference>
<dbReference type="NCBIfam" id="TIGR01167">
    <property type="entry name" value="LPXTG_anchor"/>
    <property type="match status" value="1"/>
</dbReference>
<dbReference type="NCBIfam" id="TIGR01168">
    <property type="entry name" value="YSIRK_signal"/>
    <property type="match status" value="1"/>
</dbReference>
<dbReference type="PANTHER" id="PTHR37824">
    <property type="entry name" value="IRON-REGULATED SURFACE DETERMINANT PROTEIN C"/>
    <property type="match status" value="1"/>
</dbReference>
<dbReference type="PANTHER" id="PTHR37824:SF1">
    <property type="entry name" value="IRON-REGULATED SURFACE DETERMINANT PROTEIN C"/>
    <property type="match status" value="1"/>
</dbReference>
<dbReference type="Pfam" id="PF00746">
    <property type="entry name" value="Gram_pos_anchor"/>
    <property type="match status" value="1"/>
</dbReference>
<dbReference type="Pfam" id="PF20861">
    <property type="entry name" value="Isd_H_B_linker"/>
    <property type="match status" value="1"/>
</dbReference>
<dbReference type="Pfam" id="PF05031">
    <property type="entry name" value="NEAT"/>
    <property type="match status" value="2"/>
</dbReference>
<dbReference type="Pfam" id="PF04650">
    <property type="entry name" value="YSIRK_signal"/>
    <property type="match status" value="1"/>
</dbReference>
<dbReference type="SMART" id="SM00725">
    <property type="entry name" value="NEAT"/>
    <property type="match status" value="2"/>
</dbReference>
<dbReference type="SUPFAM" id="SSF158911">
    <property type="entry name" value="NEAT domain-like"/>
    <property type="match status" value="2"/>
</dbReference>
<dbReference type="PROSITE" id="PS50847">
    <property type="entry name" value="GRAM_POS_ANCHORING"/>
    <property type="match status" value="1"/>
</dbReference>
<dbReference type="PROSITE" id="PS50978">
    <property type="entry name" value="NEAT"/>
    <property type="match status" value="2"/>
</dbReference>
<accession>Q8NX66</accession>
<sequence length="645" mass="72192">MNKQQKEFKSFYSIRKSSLGVASVAISTLLLLMSNGEAQAAAEETGGTNTEAQPKTEAVASPTTTSEKAPETKPVANAVSVSNKEVEAPTSETKEAKEVKEVKAPKETKEVKPAAKATNNTYPILNQELREAIKNPAIKDKDHSAPNSRPIDFEMKKKDGTQQFYHYASSVKPARVIFTDSKPEIELGLQSGQFWRKFEVYEGDKKLPIKLVSYDTVKDYAYIRFSVSNGTKAVKIVSSTHFNNKEEKYDYTLMEFAQPIYNSADKFKTEEDYKAEKLLAPYKKAKTLERQVYELNKIQDKLPEKLKAEYKKKLEDTKKALDEQVKSAITEFQNVQPTNEKMTDLQDTKYVVYESVENNESMMDTFVKHPIKTGMLNGKKYMVMETTNDDYWKDFMVEGQRVRTISKDAKNNTRTIIFPYVEGKTLYDAIVKVHVKTIDYDGQYHVRIVDKEAFTKANTDKSNKKEQQDNSAKKEATPATPSKPTPSPVEKESQKQDSQKDDNKQLPSVEKENDASSESGKDKTPATKPTKGEVESSSTTPTKVVSTTQNVAKPTTASSKTTKDVVQTSAGSSEAKDSAPLQKANIKNTNDGHTQSQNNKNTQENKAKSLPQTGEESNKDMTLPLMALLALSSIVAFVLPRKRKN</sequence>
<evidence type="ECO:0000250" key="1"/>
<evidence type="ECO:0000250" key="2">
    <source>
        <dbReference type="UniProtKB" id="A6QG30"/>
    </source>
</evidence>
<evidence type="ECO:0000250" key="3">
    <source>
        <dbReference type="UniProtKB" id="Q2FZF0"/>
    </source>
</evidence>
<evidence type="ECO:0000250" key="4">
    <source>
        <dbReference type="UniProtKB" id="Q7A656"/>
    </source>
</evidence>
<evidence type="ECO:0000255" key="5"/>
<evidence type="ECO:0000255" key="6">
    <source>
        <dbReference type="PROSITE-ProRule" id="PRU00337"/>
    </source>
</evidence>
<evidence type="ECO:0000255" key="7">
    <source>
        <dbReference type="PROSITE-ProRule" id="PRU00477"/>
    </source>
</evidence>
<evidence type="ECO:0000256" key="8">
    <source>
        <dbReference type="SAM" id="MobiDB-lite"/>
    </source>
</evidence>
<evidence type="ECO:0000269" key="9">
    <source>
    </source>
</evidence>
<evidence type="ECO:0000269" key="10">
    <source>
    </source>
</evidence>
<evidence type="ECO:0000269" key="11">
    <source>
    </source>
</evidence>
<evidence type="ECO:0000305" key="12"/>
<evidence type="ECO:0007829" key="13">
    <source>
        <dbReference type="PDB" id="7PCH"/>
    </source>
</evidence>
<gene>
    <name type="primary">isdB</name>
    <name type="synonym">frpB</name>
    <name type="synonym">sasJ</name>
    <name type="synonym">sirH</name>
    <name type="ordered locus">MW1011</name>
</gene>
<feature type="signal peptide" evidence="5">
    <location>
        <begin position="1"/>
        <end position="40"/>
    </location>
</feature>
<feature type="chain" id="PRO_0000292575" description="Iron-regulated surface determinant protein B">
    <location>
        <begin position="41"/>
        <end position="613"/>
    </location>
</feature>
<feature type="propeptide" id="PRO_0000292576" description="Removed by sortase" evidence="7">
    <location>
        <begin position="614"/>
        <end position="645"/>
    </location>
</feature>
<feature type="domain" description="NEAT 1" evidence="6">
    <location>
        <begin position="144"/>
        <end position="269"/>
    </location>
</feature>
<feature type="domain" description="NEAT 2" evidence="6">
    <location>
        <begin position="341"/>
        <end position="458"/>
    </location>
</feature>
<feature type="region of interest" description="Disordered" evidence="8">
    <location>
        <begin position="38"/>
        <end position="113"/>
    </location>
</feature>
<feature type="region of interest" description="Disordered" evidence="8">
    <location>
        <begin position="458"/>
        <end position="619"/>
    </location>
</feature>
<feature type="short sequence motif" description="YSIRK-G/S signaling motif" evidence="3">
    <location>
        <begin position="12"/>
        <end position="23"/>
    </location>
</feature>
<feature type="short sequence motif" description="LPXTG sorting signal" evidence="7">
    <location>
        <begin position="610"/>
        <end position="614"/>
    </location>
</feature>
<feature type="compositionally biased region" description="Low complexity" evidence="8">
    <location>
        <begin position="38"/>
        <end position="53"/>
    </location>
</feature>
<feature type="compositionally biased region" description="Basic and acidic residues" evidence="8">
    <location>
        <begin position="84"/>
        <end position="113"/>
    </location>
</feature>
<feature type="compositionally biased region" description="Basic and acidic residues" evidence="8">
    <location>
        <begin position="458"/>
        <end position="476"/>
    </location>
</feature>
<feature type="compositionally biased region" description="Basic and acidic residues" evidence="8">
    <location>
        <begin position="489"/>
        <end position="534"/>
    </location>
</feature>
<feature type="compositionally biased region" description="Low complexity" evidence="8">
    <location>
        <begin position="535"/>
        <end position="560"/>
    </location>
</feature>
<feature type="compositionally biased region" description="Polar residues" evidence="8">
    <location>
        <begin position="585"/>
        <end position="615"/>
    </location>
</feature>
<feature type="binding site" description="axial binding residue" evidence="4">
    <location>
        <position position="362"/>
    </location>
    <ligand>
        <name>heme</name>
        <dbReference type="ChEBI" id="CHEBI:30413"/>
    </ligand>
    <ligandPart>
        <name>Fe</name>
        <dbReference type="ChEBI" id="CHEBI:18248"/>
    </ligandPart>
</feature>
<feature type="binding site" description="axial binding residue" evidence="4">
    <location>
        <position position="440"/>
    </location>
    <ligand>
        <name>heme</name>
        <dbReference type="ChEBI" id="CHEBI:30413"/>
    </ligand>
    <ligandPart>
        <name>Fe</name>
        <dbReference type="ChEBI" id="CHEBI:18248"/>
    </ligandPart>
</feature>
<feature type="modified residue" description="Pentaglycyl murein peptidoglycan amidated threonine" evidence="7">
    <location>
        <position position="613"/>
    </location>
</feature>
<feature type="mutagenesis site" description="Complete loss of binding to metHb." evidence="11">
    <original>F</original>
    <variation>D</variation>
    <location>
        <position position="164"/>
    </location>
</feature>
<feature type="helix" evidence="13">
    <location>
        <begin position="129"/>
        <end position="133"/>
    </location>
</feature>
<feature type="turn" evidence="13">
    <location>
        <begin position="136"/>
        <end position="138"/>
    </location>
</feature>
<feature type="strand" evidence="13">
    <location>
        <begin position="146"/>
        <end position="151"/>
    </location>
</feature>
<feature type="strand" evidence="13">
    <location>
        <begin position="153"/>
        <end position="156"/>
    </location>
</feature>
<feature type="helix" evidence="13">
    <location>
        <begin position="164"/>
        <end position="168"/>
    </location>
</feature>
<feature type="strand" evidence="13">
    <location>
        <begin position="170"/>
        <end position="177"/>
    </location>
</feature>
<feature type="strand" evidence="13">
    <location>
        <begin position="180"/>
        <end position="182"/>
    </location>
</feature>
<feature type="strand" evidence="13">
    <location>
        <begin position="184"/>
        <end position="190"/>
    </location>
</feature>
<feature type="helix" evidence="13">
    <location>
        <begin position="192"/>
        <end position="194"/>
    </location>
</feature>
<feature type="strand" evidence="13">
    <location>
        <begin position="195"/>
        <end position="202"/>
    </location>
</feature>
<feature type="strand" evidence="13">
    <location>
        <begin position="205"/>
        <end position="207"/>
    </location>
</feature>
<feature type="strand" evidence="13">
    <location>
        <begin position="209"/>
        <end position="215"/>
    </location>
</feature>
<feature type="turn" evidence="13">
    <location>
        <begin position="216"/>
        <end position="219"/>
    </location>
</feature>
<feature type="strand" evidence="13">
    <location>
        <begin position="220"/>
        <end position="226"/>
    </location>
</feature>
<feature type="strand" evidence="13">
    <location>
        <begin position="231"/>
        <end position="242"/>
    </location>
</feature>
<feature type="strand" evidence="13">
    <location>
        <begin position="245"/>
        <end position="250"/>
    </location>
</feature>
<feature type="strand" evidence="13">
    <location>
        <begin position="253"/>
        <end position="260"/>
    </location>
</feature>
<feature type="turn" evidence="13">
    <location>
        <begin position="264"/>
        <end position="266"/>
    </location>
</feature>
<feature type="helix" evidence="13">
    <location>
        <begin position="270"/>
        <end position="284"/>
    </location>
</feature>
<feature type="helix" evidence="13">
    <location>
        <begin position="288"/>
        <end position="299"/>
    </location>
</feature>
<feature type="helix" evidence="13">
    <location>
        <begin position="304"/>
        <end position="331"/>
    </location>
</feature>
<feature type="turn" evidence="13">
    <location>
        <begin position="332"/>
        <end position="334"/>
    </location>
</feature>
<feature type="strand" evidence="13">
    <location>
        <begin position="343"/>
        <end position="348"/>
    </location>
</feature>
<feature type="strand" evidence="13">
    <location>
        <begin position="350"/>
        <end position="353"/>
    </location>
</feature>
<feature type="strand" evidence="13">
    <location>
        <begin position="355"/>
        <end position="357"/>
    </location>
</feature>
<feature type="helix" evidence="13">
    <location>
        <begin position="362"/>
        <end position="366"/>
    </location>
</feature>
<feature type="strand" evidence="13">
    <location>
        <begin position="367"/>
        <end position="376"/>
    </location>
</feature>
<feature type="strand" evidence="13">
    <location>
        <begin position="379"/>
        <end position="388"/>
    </location>
</feature>
<feature type="turn" evidence="13">
    <location>
        <begin position="389"/>
        <end position="391"/>
    </location>
</feature>
<feature type="strand" evidence="13">
    <location>
        <begin position="392"/>
        <end position="397"/>
    </location>
</feature>
<feature type="strand" evidence="13">
    <location>
        <begin position="403"/>
        <end position="408"/>
    </location>
</feature>
<feature type="turn" evidence="13">
    <location>
        <begin position="409"/>
        <end position="412"/>
    </location>
</feature>
<feature type="strand" evidence="13">
    <location>
        <begin position="413"/>
        <end position="419"/>
    </location>
</feature>
<feature type="strand" evidence="13">
    <location>
        <begin position="428"/>
        <end position="435"/>
    </location>
</feature>
<feature type="turn" evidence="13">
    <location>
        <begin position="436"/>
        <end position="439"/>
    </location>
</feature>
<feature type="strand" evidence="13">
    <location>
        <begin position="440"/>
        <end position="450"/>
    </location>
</feature>
<feature type="helix" evidence="13">
    <location>
        <begin position="451"/>
        <end position="462"/>
    </location>
</feature>